<accession>Q2JTY2</accession>
<keyword id="KW-0648">Protein biosynthesis</keyword>
<keyword id="KW-0808">Transferase</keyword>
<protein>
    <recommendedName>
        <fullName evidence="1">Methionyl-tRNA formyltransferase</fullName>
        <ecNumber evidence="1">2.1.2.9</ecNumber>
    </recommendedName>
</protein>
<sequence>MRVVFFGTPEFALPSLQILLQPQSPFEVVGLVCQPDRPQGRGQKVLPPPTKILAQAHGIPVWQPGRLRRDPEVLAALEALAADVFVVVAYGQILPPAVLQMPKLGCINVHASLLPAYRGAAPIQWAIANGETETGVTTMLMDEGMDTGAILLQAKLPIEPEQTGLELASQLAQRGAELLVETLVKLEKGELTPIPQDDSRATYAPLLKKQDFQLDWQRPAQALHNQIRAFSPDCFTGLQGQRIKIVRSAAPQLHPPPAELPPGSPGEVVGLARGEGVYVATGEGSLLIRRAQLPGRKEQSACDLVNGGQLRVGMRFEVLPDP</sequence>
<gene>
    <name evidence="1" type="primary">fmt</name>
    <name type="ordered locus">CYA_1691</name>
</gene>
<name>FMT_SYNJA</name>
<dbReference type="EC" id="2.1.2.9" evidence="1"/>
<dbReference type="EMBL" id="CP000239">
    <property type="protein sequence ID" value="ABC99847.1"/>
    <property type="molecule type" value="Genomic_DNA"/>
</dbReference>
<dbReference type="RefSeq" id="WP_011430523.1">
    <property type="nucleotide sequence ID" value="NC_007775.1"/>
</dbReference>
<dbReference type="SMR" id="Q2JTY2"/>
<dbReference type="STRING" id="321327.CYA_1691"/>
<dbReference type="KEGG" id="cya:CYA_1691"/>
<dbReference type="eggNOG" id="COG0223">
    <property type="taxonomic scope" value="Bacteria"/>
</dbReference>
<dbReference type="HOGENOM" id="CLU_033347_1_1_3"/>
<dbReference type="OrthoDB" id="9802815at2"/>
<dbReference type="Proteomes" id="UP000008818">
    <property type="component" value="Chromosome"/>
</dbReference>
<dbReference type="GO" id="GO:0005829">
    <property type="term" value="C:cytosol"/>
    <property type="evidence" value="ECO:0007669"/>
    <property type="project" value="TreeGrafter"/>
</dbReference>
<dbReference type="GO" id="GO:0004479">
    <property type="term" value="F:methionyl-tRNA formyltransferase activity"/>
    <property type="evidence" value="ECO:0007669"/>
    <property type="project" value="UniProtKB-UniRule"/>
</dbReference>
<dbReference type="CDD" id="cd08646">
    <property type="entry name" value="FMT_core_Met-tRNA-FMT_N"/>
    <property type="match status" value="1"/>
</dbReference>
<dbReference type="CDD" id="cd08704">
    <property type="entry name" value="Met_tRNA_FMT_C"/>
    <property type="match status" value="1"/>
</dbReference>
<dbReference type="FunFam" id="3.40.50.12230:FF:000001">
    <property type="entry name" value="Methionyl-tRNA formyltransferase"/>
    <property type="match status" value="1"/>
</dbReference>
<dbReference type="Gene3D" id="3.40.50.12230">
    <property type="match status" value="1"/>
</dbReference>
<dbReference type="HAMAP" id="MF_00182">
    <property type="entry name" value="Formyl_trans"/>
    <property type="match status" value="1"/>
</dbReference>
<dbReference type="InterPro" id="IPR005794">
    <property type="entry name" value="Fmt"/>
</dbReference>
<dbReference type="InterPro" id="IPR005793">
    <property type="entry name" value="Formyl_trans_C"/>
</dbReference>
<dbReference type="InterPro" id="IPR002376">
    <property type="entry name" value="Formyl_transf_N"/>
</dbReference>
<dbReference type="InterPro" id="IPR036477">
    <property type="entry name" value="Formyl_transf_N_sf"/>
</dbReference>
<dbReference type="InterPro" id="IPR011034">
    <property type="entry name" value="Formyl_transferase-like_C_sf"/>
</dbReference>
<dbReference type="InterPro" id="IPR001555">
    <property type="entry name" value="GART_AS"/>
</dbReference>
<dbReference type="InterPro" id="IPR044135">
    <property type="entry name" value="Met-tRNA-FMT_C"/>
</dbReference>
<dbReference type="InterPro" id="IPR041711">
    <property type="entry name" value="Met-tRNA-FMT_N"/>
</dbReference>
<dbReference type="NCBIfam" id="TIGR00460">
    <property type="entry name" value="fmt"/>
    <property type="match status" value="1"/>
</dbReference>
<dbReference type="PANTHER" id="PTHR11138">
    <property type="entry name" value="METHIONYL-TRNA FORMYLTRANSFERASE"/>
    <property type="match status" value="1"/>
</dbReference>
<dbReference type="PANTHER" id="PTHR11138:SF5">
    <property type="entry name" value="METHIONYL-TRNA FORMYLTRANSFERASE, MITOCHONDRIAL"/>
    <property type="match status" value="1"/>
</dbReference>
<dbReference type="Pfam" id="PF02911">
    <property type="entry name" value="Formyl_trans_C"/>
    <property type="match status" value="1"/>
</dbReference>
<dbReference type="Pfam" id="PF00551">
    <property type="entry name" value="Formyl_trans_N"/>
    <property type="match status" value="1"/>
</dbReference>
<dbReference type="SUPFAM" id="SSF50486">
    <property type="entry name" value="FMT C-terminal domain-like"/>
    <property type="match status" value="1"/>
</dbReference>
<dbReference type="SUPFAM" id="SSF53328">
    <property type="entry name" value="Formyltransferase"/>
    <property type="match status" value="1"/>
</dbReference>
<dbReference type="PROSITE" id="PS00373">
    <property type="entry name" value="GART"/>
    <property type="match status" value="1"/>
</dbReference>
<proteinExistence type="inferred from homology"/>
<reference key="1">
    <citation type="journal article" date="2007" name="ISME J.">
        <title>Population level functional diversity in a microbial community revealed by comparative genomic and metagenomic analyses.</title>
        <authorList>
            <person name="Bhaya D."/>
            <person name="Grossman A.R."/>
            <person name="Steunou A.-S."/>
            <person name="Khuri N."/>
            <person name="Cohan F.M."/>
            <person name="Hamamura N."/>
            <person name="Melendrez M.C."/>
            <person name="Bateson M.M."/>
            <person name="Ward D.M."/>
            <person name="Heidelberg J.F."/>
        </authorList>
    </citation>
    <scope>NUCLEOTIDE SEQUENCE [LARGE SCALE GENOMIC DNA]</scope>
    <source>
        <strain>JA-3-3Ab</strain>
    </source>
</reference>
<feature type="chain" id="PRO_1000020187" description="Methionyl-tRNA formyltransferase">
    <location>
        <begin position="1"/>
        <end position="322"/>
    </location>
</feature>
<feature type="binding site" evidence="1">
    <location>
        <begin position="112"/>
        <end position="115"/>
    </location>
    <ligand>
        <name>(6S)-5,6,7,8-tetrahydrofolate</name>
        <dbReference type="ChEBI" id="CHEBI:57453"/>
    </ligand>
</feature>
<comment type="function">
    <text evidence="1">Attaches a formyl group to the free amino group of methionyl-tRNA(fMet). The formyl group appears to play a dual role in the initiator identity of N-formylmethionyl-tRNA by promoting its recognition by IF2 and preventing the misappropriation of this tRNA by the elongation apparatus.</text>
</comment>
<comment type="catalytic activity">
    <reaction evidence="1">
        <text>L-methionyl-tRNA(fMet) + (6R)-10-formyltetrahydrofolate = N-formyl-L-methionyl-tRNA(fMet) + (6S)-5,6,7,8-tetrahydrofolate + H(+)</text>
        <dbReference type="Rhea" id="RHEA:24380"/>
        <dbReference type="Rhea" id="RHEA-COMP:9952"/>
        <dbReference type="Rhea" id="RHEA-COMP:9953"/>
        <dbReference type="ChEBI" id="CHEBI:15378"/>
        <dbReference type="ChEBI" id="CHEBI:57453"/>
        <dbReference type="ChEBI" id="CHEBI:78530"/>
        <dbReference type="ChEBI" id="CHEBI:78844"/>
        <dbReference type="ChEBI" id="CHEBI:195366"/>
        <dbReference type="EC" id="2.1.2.9"/>
    </reaction>
</comment>
<comment type="similarity">
    <text evidence="1">Belongs to the Fmt family.</text>
</comment>
<evidence type="ECO:0000255" key="1">
    <source>
        <dbReference type="HAMAP-Rule" id="MF_00182"/>
    </source>
</evidence>
<organism>
    <name type="scientific">Synechococcus sp. (strain JA-3-3Ab)</name>
    <name type="common">Cyanobacteria bacterium Yellowstone A-Prime</name>
    <dbReference type="NCBI Taxonomy" id="321327"/>
    <lineage>
        <taxon>Bacteria</taxon>
        <taxon>Bacillati</taxon>
        <taxon>Cyanobacteriota</taxon>
        <taxon>Cyanophyceae</taxon>
        <taxon>Synechococcales</taxon>
        <taxon>Synechococcaceae</taxon>
        <taxon>Synechococcus</taxon>
    </lineage>
</organism>